<organism>
    <name type="scientific">Brucella suis (strain ATCC 23445 / NCTC 10510)</name>
    <dbReference type="NCBI Taxonomy" id="470137"/>
    <lineage>
        <taxon>Bacteria</taxon>
        <taxon>Pseudomonadati</taxon>
        <taxon>Pseudomonadota</taxon>
        <taxon>Alphaproteobacteria</taxon>
        <taxon>Hyphomicrobiales</taxon>
        <taxon>Brucellaceae</taxon>
        <taxon>Brucella/Ochrobactrum group</taxon>
        <taxon>Brucella</taxon>
    </lineage>
</organism>
<evidence type="ECO:0000255" key="1">
    <source>
        <dbReference type="HAMAP-Rule" id="MF_00476"/>
    </source>
</evidence>
<accession>A9WZ97</accession>
<name>NIKR_BRUSI</name>
<dbReference type="EMBL" id="CP000912">
    <property type="protein sequence ID" value="ABY39763.1"/>
    <property type="molecule type" value="Genomic_DNA"/>
</dbReference>
<dbReference type="SMR" id="A9WZ97"/>
<dbReference type="KEGG" id="bmt:BSUIS_B0797"/>
<dbReference type="HOGENOM" id="CLU_113319_1_4_5"/>
<dbReference type="Proteomes" id="UP000008545">
    <property type="component" value="Chromosome II"/>
</dbReference>
<dbReference type="GO" id="GO:0003677">
    <property type="term" value="F:DNA binding"/>
    <property type="evidence" value="ECO:0007669"/>
    <property type="project" value="UniProtKB-KW"/>
</dbReference>
<dbReference type="GO" id="GO:0003700">
    <property type="term" value="F:DNA-binding transcription factor activity"/>
    <property type="evidence" value="ECO:0007669"/>
    <property type="project" value="UniProtKB-UniRule"/>
</dbReference>
<dbReference type="GO" id="GO:0016151">
    <property type="term" value="F:nickel cation binding"/>
    <property type="evidence" value="ECO:0007669"/>
    <property type="project" value="UniProtKB-UniRule"/>
</dbReference>
<dbReference type="GO" id="GO:0010045">
    <property type="term" value="P:response to nickel cation"/>
    <property type="evidence" value="ECO:0007669"/>
    <property type="project" value="InterPro"/>
</dbReference>
<dbReference type="CDD" id="cd22231">
    <property type="entry name" value="RHH_NikR_HicB-like"/>
    <property type="match status" value="1"/>
</dbReference>
<dbReference type="Gene3D" id="3.30.70.1150">
    <property type="entry name" value="ACT-like. Chain A, domain 2"/>
    <property type="match status" value="1"/>
</dbReference>
<dbReference type="Gene3D" id="1.10.1220.10">
    <property type="entry name" value="Met repressor-like"/>
    <property type="match status" value="1"/>
</dbReference>
<dbReference type="HAMAP" id="MF_00476">
    <property type="entry name" value="NikR"/>
    <property type="match status" value="1"/>
</dbReference>
<dbReference type="InterPro" id="IPR027271">
    <property type="entry name" value="Acetolactate_synth/TF_NikR_C"/>
</dbReference>
<dbReference type="InterPro" id="IPR045865">
    <property type="entry name" value="ACT-like_dom_sf"/>
</dbReference>
<dbReference type="InterPro" id="IPR013321">
    <property type="entry name" value="Arc_rbn_hlx_hlx"/>
</dbReference>
<dbReference type="InterPro" id="IPR002145">
    <property type="entry name" value="CopG"/>
</dbReference>
<dbReference type="InterPro" id="IPR050192">
    <property type="entry name" value="CopG/NikR_regulator"/>
</dbReference>
<dbReference type="InterPro" id="IPR022988">
    <property type="entry name" value="Ni_resp_reg_NikR"/>
</dbReference>
<dbReference type="InterPro" id="IPR014160">
    <property type="entry name" value="Nickel_NikR_proteobac"/>
</dbReference>
<dbReference type="InterPro" id="IPR010985">
    <property type="entry name" value="Ribbon_hlx_hlx"/>
</dbReference>
<dbReference type="InterPro" id="IPR014864">
    <property type="entry name" value="TF_NikR_Ni-bd_C"/>
</dbReference>
<dbReference type="NCBIfam" id="TIGR02793">
    <property type="entry name" value="nikR"/>
    <property type="match status" value="1"/>
</dbReference>
<dbReference type="NCBIfam" id="NF002815">
    <property type="entry name" value="PRK02967.1"/>
    <property type="match status" value="1"/>
</dbReference>
<dbReference type="NCBIfam" id="NF003381">
    <property type="entry name" value="PRK04460.1"/>
    <property type="match status" value="1"/>
</dbReference>
<dbReference type="PANTHER" id="PTHR34719">
    <property type="entry name" value="NICKEL-RESPONSIVE REGULATOR"/>
    <property type="match status" value="1"/>
</dbReference>
<dbReference type="PANTHER" id="PTHR34719:SF2">
    <property type="entry name" value="NICKEL-RESPONSIVE REGULATOR"/>
    <property type="match status" value="1"/>
</dbReference>
<dbReference type="Pfam" id="PF08753">
    <property type="entry name" value="NikR_C"/>
    <property type="match status" value="1"/>
</dbReference>
<dbReference type="Pfam" id="PF01402">
    <property type="entry name" value="RHH_1"/>
    <property type="match status" value="1"/>
</dbReference>
<dbReference type="SUPFAM" id="SSF55021">
    <property type="entry name" value="ACT-like"/>
    <property type="match status" value="1"/>
</dbReference>
<dbReference type="SUPFAM" id="SSF47598">
    <property type="entry name" value="Ribbon-helix-helix"/>
    <property type="match status" value="1"/>
</dbReference>
<reference key="1">
    <citation type="submission" date="2007-12" db="EMBL/GenBank/DDBJ databases">
        <title>Brucella suis ATCC 23445 whole genome shotgun sequencing project.</title>
        <authorList>
            <person name="Setubal J.C."/>
            <person name="Bowns C."/>
            <person name="Boyle S."/>
            <person name="Crasta O.R."/>
            <person name="Czar M.J."/>
            <person name="Dharmanolla C."/>
            <person name="Gillespie J.J."/>
            <person name="Kenyon R.W."/>
            <person name="Lu J."/>
            <person name="Mane S."/>
            <person name="Mohapatra S."/>
            <person name="Nagrani S."/>
            <person name="Purkayastha A."/>
            <person name="Rajasimha H.K."/>
            <person name="Shallom J.M."/>
            <person name="Shallom S."/>
            <person name="Shukla M."/>
            <person name="Snyder E.E."/>
            <person name="Sobral B.W."/>
            <person name="Wattam A.R."/>
            <person name="Will R."/>
            <person name="Williams K."/>
            <person name="Yoo H."/>
            <person name="Bruce D."/>
            <person name="Detter C."/>
            <person name="Munk C."/>
            <person name="Brettin T.S."/>
        </authorList>
    </citation>
    <scope>NUCLEOTIDE SEQUENCE [LARGE SCALE GENOMIC DNA]</scope>
    <source>
        <strain>ATCC 23445 / NCTC 10510</strain>
    </source>
</reference>
<keyword id="KW-0238">DNA-binding</keyword>
<keyword id="KW-0479">Metal-binding</keyword>
<keyword id="KW-0533">Nickel</keyword>
<keyword id="KW-0804">Transcription</keyword>
<keyword id="KW-0805">Transcription regulation</keyword>
<proteinExistence type="inferred from homology"/>
<gene>
    <name type="ordered locus">BSUIS_B0797</name>
</gene>
<feature type="chain" id="PRO_1000081258" description="Putative nickel-responsive regulator">
    <location>
        <begin position="1"/>
        <end position="132"/>
    </location>
</feature>
<feature type="binding site" evidence="1">
    <location>
        <position position="77"/>
    </location>
    <ligand>
        <name>Ni(2+)</name>
        <dbReference type="ChEBI" id="CHEBI:49786"/>
    </ligand>
</feature>
<feature type="binding site" evidence="1">
    <location>
        <position position="88"/>
    </location>
    <ligand>
        <name>Ni(2+)</name>
        <dbReference type="ChEBI" id="CHEBI:49786"/>
    </ligand>
</feature>
<feature type="binding site" evidence="1">
    <location>
        <position position="90"/>
    </location>
    <ligand>
        <name>Ni(2+)</name>
        <dbReference type="ChEBI" id="CHEBI:49786"/>
    </ligand>
</feature>
<feature type="binding site" evidence="1">
    <location>
        <position position="96"/>
    </location>
    <ligand>
        <name>Ni(2+)</name>
        <dbReference type="ChEBI" id="CHEBI:49786"/>
    </ligand>
</feature>
<protein>
    <recommendedName>
        <fullName evidence="1">Putative nickel-responsive regulator</fullName>
    </recommendedName>
</protein>
<comment type="function">
    <text evidence="1">Transcriptional regulator.</text>
</comment>
<comment type="cofactor">
    <cofactor evidence="1">
        <name>Ni(2+)</name>
        <dbReference type="ChEBI" id="CHEBI:49786"/>
    </cofactor>
    <text evidence="1">Binds 1 nickel ion per subunit.</text>
</comment>
<comment type="similarity">
    <text evidence="1">Belongs to the transcriptional regulatory CopG/NikR family.</text>
</comment>
<sequence length="132" mass="14930">MQRITITIDDDLMAALDRMIEIKGYQNRSEALRDLARTGLQQASLEEGQMEACVGVLSYTYDHSARDLSKKLTNTHHDHHNISVASMHVHLDHDRCLEVSILKGKTDDVRHFADHVKAERHVTHGTLAVLPL</sequence>